<protein>
    <recommendedName>
        <fullName evidence="1">Large ribosomal subunit protein uL2</fullName>
    </recommendedName>
    <alternativeName>
        <fullName evidence="3">50S ribosomal protein L2</fullName>
    </alternativeName>
</protein>
<proteinExistence type="inferred from homology"/>
<evidence type="ECO:0000255" key="1">
    <source>
        <dbReference type="HAMAP-Rule" id="MF_01320"/>
    </source>
</evidence>
<evidence type="ECO:0000256" key="2">
    <source>
        <dbReference type="SAM" id="MobiDB-lite"/>
    </source>
</evidence>
<evidence type="ECO:0000305" key="3"/>
<keyword id="KW-1185">Reference proteome</keyword>
<keyword id="KW-0687">Ribonucleoprotein</keyword>
<keyword id="KW-0689">Ribosomal protein</keyword>
<keyword id="KW-0694">RNA-binding</keyword>
<keyword id="KW-0699">rRNA-binding</keyword>
<accession>Q5E8B2</accession>
<comment type="function">
    <text evidence="1">One of the primary rRNA binding proteins. Required for association of the 30S and 50S subunits to form the 70S ribosome, for tRNA binding and peptide bond formation. It has been suggested to have peptidyltransferase activity; this is somewhat controversial. Makes several contacts with the 16S rRNA in the 70S ribosome.</text>
</comment>
<comment type="subunit">
    <text evidence="1">Part of the 50S ribosomal subunit. Forms a bridge to the 30S subunit in the 70S ribosome.</text>
</comment>
<comment type="similarity">
    <text evidence="1">Belongs to the universal ribosomal protein uL2 family.</text>
</comment>
<feature type="chain" id="PRO_0000237264" description="Large ribosomal subunit protein uL2">
    <location>
        <begin position="1"/>
        <end position="274"/>
    </location>
</feature>
<feature type="region of interest" description="Disordered" evidence="2">
    <location>
        <begin position="223"/>
        <end position="274"/>
    </location>
</feature>
<name>RL2_ALIF1</name>
<dbReference type="EMBL" id="CP000020">
    <property type="protein sequence ID" value="AAW84734.1"/>
    <property type="molecule type" value="Genomic_DNA"/>
</dbReference>
<dbReference type="RefSeq" id="WP_005417230.1">
    <property type="nucleotide sequence ID" value="NZ_CAWLES010000001.1"/>
</dbReference>
<dbReference type="RefSeq" id="YP_203622.1">
    <property type="nucleotide sequence ID" value="NC_006840.2"/>
</dbReference>
<dbReference type="SMR" id="Q5E8B2"/>
<dbReference type="STRING" id="312309.VF_0239"/>
<dbReference type="EnsemblBacteria" id="AAW84734">
    <property type="protein sequence ID" value="AAW84734"/>
    <property type="gene ID" value="VF_0239"/>
</dbReference>
<dbReference type="GeneID" id="54162861"/>
<dbReference type="KEGG" id="vfi:VF_0239"/>
<dbReference type="PATRIC" id="fig|312309.11.peg.235"/>
<dbReference type="eggNOG" id="COG0090">
    <property type="taxonomic scope" value="Bacteria"/>
</dbReference>
<dbReference type="HOGENOM" id="CLU_036235_2_1_6"/>
<dbReference type="OrthoDB" id="9778722at2"/>
<dbReference type="Proteomes" id="UP000000537">
    <property type="component" value="Chromosome I"/>
</dbReference>
<dbReference type="GO" id="GO:0015934">
    <property type="term" value="C:large ribosomal subunit"/>
    <property type="evidence" value="ECO:0007669"/>
    <property type="project" value="InterPro"/>
</dbReference>
<dbReference type="GO" id="GO:0019843">
    <property type="term" value="F:rRNA binding"/>
    <property type="evidence" value="ECO:0007669"/>
    <property type="project" value="UniProtKB-UniRule"/>
</dbReference>
<dbReference type="GO" id="GO:0003735">
    <property type="term" value="F:structural constituent of ribosome"/>
    <property type="evidence" value="ECO:0007669"/>
    <property type="project" value="InterPro"/>
</dbReference>
<dbReference type="GO" id="GO:0016740">
    <property type="term" value="F:transferase activity"/>
    <property type="evidence" value="ECO:0007669"/>
    <property type="project" value="InterPro"/>
</dbReference>
<dbReference type="GO" id="GO:0002181">
    <property type="term" value="P:cytoplasmic translation"/>
    <property type="evidence" value="ECO:0007669"/>
    <property type="project" value="TreeGrafter"/>
</dbReference>
<dbReference type="FunFam" id="2.30.30.30:FF:000001">
    <property type="entry name" value="50S ribosomal protein L2"/>
    <property type="match status" value="1"/>
</dbReference>
<dbReference type="FunFam" id="2.40.50.140:FF:000003">
    <property type="entry name" value="50S ribosomal protein L2"/>
    <property type="match status" value="1"/>
</dbReference>
<dbReference type="FunFam" id="4.10.950.10:FF:000001">
    <property type="entry name" value="50S ribosomal protein L2"/>
    <property type="match status" value="1"/>
</dbReference>
<dbReference type="Gene3D" id="2.30.30.30">
    <property type="match status" value="1"/>
</dbReference>
<dbReference type="Gene3D" id="2.40.50.140">
    <property type="entry name" value="Nucleic acid-binding proteins"/>
    <property type="match status" value="1"/>
</dbReference>
<dbReference type="Gene3D" id="4.10.950.10">
    <property type="entry name" value="Ribosomal protein L2, domain 3"/>
    <property type="match status" value="1"/>
</dbReference>
<dbReference type="HAMAP" id="MF_01320_B">
    <property type="entry name" value="Ribosomal_uL2_B"/>
    <property type="match status" value="1"/>
</dbReference>
<dbReference type="InterPro" id="IPR012340">
    <property type="entry name" value="NA-bd_OB-fold"/>
</dbReference>
<dbReference type="InterPro" id="IPR014722">
    <property type="entry name" value="Rib_uL2_dom2"/>
</dbReference>
<dbReference type="InterPro" id="IPR002171">
    <property type="entry name" value="Ribosomal_uL2"/>
</dbReference>
<dbReference type="InterPro" id="IPR005880">
    <property type="entry name" value="Ribosomal_uL2_bac/org-type"/>
</dbReference>
<dbReference type="InterPro" id="IPR022669">
    <property type="entry name" value="Ribosomal_uL2_C"/>
</dbReference>
<dbReference type="InterPro" id="IPR022671">
    <property type="entry name" value="Ribosomal_uL2_CS"/>
</dbReference>
<dbReference type="InterPro" id="IPR014726">
    <property type="entry name" value="Ribosomal_uL2_dom3"/>
</dbReference>
<dbReference type="InterPro" id="IPR022666">
    <property type="entry name" value="Ribosomal_uL2_RNA-bd_dom"/>
</dbReference>
<dbReference type="InterPro" id="IPR008991">
    <property type="entry name" value="Translation_prot_SH3-like_sf"/>
</dbReference>
<dbReference type="NCBIfam" id="TIGR01171">
    <property type="entry name" value="rplB_bact"/>
    <property type="match status" value="1"/>
</dbReference>
<dbReference type="PANTHER" id="PTHR13691:SF5">
    <property type="entry name" value="LARGE RIBOSOMAL SUBUNIT PROTEIN UL2M"/>
    <property type="match status" value="1"/>
</dbReference>
<dbReference type="PANTHER" id="PTHR13691">
    <property type="entry name" value="RIBOSOMAL PROTEIN L2"/>
    <property type="match status" value="1"/>
</dbReference>
<dbReference type="Pfam" id="PF00181">
    <property type="entry name" value="Ribosomal_L2"/>
    <property type="match status" value="1"/>
</dbReference>
<dbReference type="Pfam" id="PF03947">
    <property type="entry name" value="Ribosomal_L2_C"/>
    <property type="match status" value="1"/>
</dbReference>
<dbReference type="PIRSF" id="PIRSF002158">
    <property type="entry name" value="Ribosomal_L2"/>
    <property type="match status" value="1"/>
</dbReference>
<dbReference type="SMART" id="SM01383">
    <property type="entry name" value="Ribosomal_L2"/>
    <property type="match status" value="1"/>
</dbReference>
<dbReference type="SMART" id="SM01382">
    <property type="entry name" value="Ribosomal_L2_C"/>
    <property type="match status" value="1"/>
</dbReference>
<dbReference type="SUPFAM" id="SSF50249">
    <property type="entry name" value="Nucleic acid-binding proteins"/>
    <property type="match status" value="1"/>
</dbReference>
<dbReference type="SUPFAM" id="SSF50104">
    <property type="entry name" value="Translation proteins SH3-like domain"/>
    <property type="match status" value="1"/>
</dbReference>
<dbReference type="PROSITE" id="PS00467">
    <property type="entry name" value="RIBOSOMAL_L2"/>
    <property type="match status" value="1"/>
</dbReference>
<reference key="1">
    <citation type="journal article" date="2005" name="Proc. Natl. Acad. Sci. U.S.A.">
        <title>Complete genome sequence of Vibrio fischeri: a symbiotic bacterium with pathogenic congeners.</title>
        <authorList>
            <person name="Ruby E.G."/>
            <person name="Urbanowski M."/>
            <person name="Campbell J."/>
            <person name="Dunn A."/>
            <person name="Faini M."/>
            <person name="Gunsalus R."/>
            <person name="Lostroh P."/>
            <person name="Lupp C."/>
            <person name="McCann J."/>
            <person name="Millikan D."/>
            <person name="Schaefer A."/>
            <person name="Stabb E."/>
            <person name="Stevens A."/>
            <person name="Visick K."/>
            <person name="Whistler C."/>
            <person name="Greenberg E.P."/>
        </authorList>
    </citation>
    <scope>NUCLEOTIDE SEQUENCE [LARGE SCALE GENOMIC DNA]</scope>
    <source>
        <strain>ATCC 700601 / ES114</strain>
    </source>
</reference>
<sequence length="274" mass="29828">MAIVKCKPTSPGRRHVVKIVNADLHKGKPYAPLLEKNSKNGGRNNNGRITVRHVGGGHKQHYRLIDFKRTKDGIPAVVERLEYDPNRSANIALVLFADGERRYIIAPKGIQAGDTVQSGVDAPIKAGNCLPLRNIPVGSTVHCVELKPGKGAQIARSAGAYAQIIARDGAYVTLRLRSGEMRKVLSEGRATIGEVGNSEHMLRELGKAGATRWRGVRPTVRGVAMNPVDHPHGGGEGRTSGGRHPVSPWGMPTKGFKTRKNKSTDKYIVRRRNK</sequence>
<organism>
    <name type="scientific">Aliivibrio fischeri (strain ATCC 700601 / ES114)</name>
    <name type="common">Vibrio fischeri</name>
    <dbReference type="NCBI Taxonomy" id="312309"/>
    <lineage>
        <taxon>Bacteria</taxon>
        <taxon>Pseudomonadati</taxon>
        <taxon>Pseudomonadota</taxon>
        <taxon>Gammaproteobacteria</taxon>
        <taxon>Vibrionales</taxon>
        <taxon>Vibrionaceae</taxon>
        <taxon>Aliivibrio</taxon>
    </lineage>
</organism>
<gene>
    <name evidence="1" type="primary">rplB</name>
    <name type="ordered locus">VF_0239</name>
</gene>